<feature type="chain" id="PRO_0000115498" description="Small ribosomal subunit protein uS15">
    <location>
        <begin position="1"/>
        <end position="82"/>
    </location>
</feature>
<sequence>MTKKAEELKMHEKDTGSSEVQIALLTGKIETLSAHIKQFKKDKHSSVGLLRAVNRRKKLLEYLKKNKFDSYKNVLTQLNLRK</sequence>
<accession>Q4FNM7</accession>
<evidence type="ECO:0000255" key="1">
    <source>
        <dbReference type="HAMAP-Rule" id="MF_01343"/>
    </source>
</evidence>
<evidence type="ECO:0000305" key="2"/>
<reference key="1">
    <citation type="journal article" date="2005" name="Science">
        <title>Genome streamlining in a cosmopolitan oceanic bacterium.</title>
        <authorList>
            <person name="Giovannoni S.J."/>
            <person name="Tripp H.J."/>
            <person name="Givan S."/>
            <person name="Podar M."/>
            <person name="Vergin K.L."/>
            <person name="Baptista D."/>
            <person name="Bibbs L."/>
            <person name="Eads J."/>
            <person name="Richardson T.H."/>
            <person name="Noordewier M."/>
            <person name="Rappe M.S."/>
            <person name="Short J.M."/>
            <person name="Carrington J.C."/>
            <person name="Mathur E.J."/>
        </authorList>
    </citation>
    <scope>NUCLEOTIDE SEQUENCE [LARGE SCALE GENOMIC DNA]</scope>
    <source>
        <strain>HTCC1062</strain>
    </source>
</reference>
<name>RS15_PELUB</name>
<organism>
    <name type="scientific">Pelagibacter ubique (strain HTCC1062)</name>
    <dbReference type="NCBI Taxonomy" id="335992"/>
    <lineage>
        <taxon>Bacteria</taxon>
        <taxon>Pseudomonadati</taxon>
        <taxon>Pseudomonadota</taxon>
        <taxon>Alphaproteobacteria</taxon>
        <taxon>Candidatus Pelagibacterales</taxon>
        <taxon>Candidatus Pelagibacteraceae</taxon>
        <taxon>Candidatus Pelagibacter</taxon>
    </lineage>
</organism>
<gene>
    <name evidence="1" type="primary">rpsO</name>
    <name type="ordered locus">SAR11_0391</name>
</gene>
<comment type="function">
    <text evidence="1">One of the primary rRNA binding proteins, it binds directly to 16S rRNA where it helps nucleate assembly of the platform of the 30S subunit by binding and bridging several RNA helices of the 16S rRNA.</text>
</comment>
<comment type="function">
    <text evidence="1">Forms an intersubunit bridge (bridge B4) with the 23S rRNA of the 50S subunit in the ribosome.</text>
</comment>
<comment type="subunit">
    <text evidence="1">Part of the 30S ribosomal subunit. Forms a bridge to the 50S subunit in the 70S ribosome, contacting the 23S rRNA.</text>
</comment>
<comment type="similarity">
    <text evidence="1">Belongs to the universal ribosomal protein uS15 family.</text>
</comment>
<protein>
    <recommendedName>
        <fullName evidence="1">Small ribosomal subunit protein uS15</fullName>
    </recommendedName>
    <alternativeName>
        <fullName evidence="2">30S ribosomal protein S15</fullName>
    </alternativeName>
</protein>
<proteinExistence type="inferred from homology"/>
<dbReference type="EMBL" id="CP000084">
    <property type="protein sequence ID" value="AAZ21212.1"/>
    <property type="molecule type" value="Genomic_DNA"/>
</dbReference>
<dbReference type="RefSeq" id="WP_006997516.1">
    <property type="nucleotide sequence ID" value="NC_007205.1"/>
</dbReference>
<dbReference type="SMR" id="Q4FNM7"/>
<dbReference type="STRING" id="335992.SAR11_0391"/>
<dbReference type="GeneID" id="66294888"/>
<dbReference type="KEGG" id="pub:SAR11_0391"/>
<dbReference type="eggNOG" id="COG0184">
    <property type="taxonomic scope" value="Bacteria"/>
</dbReference>
<dbReference type="HOGENOM" id="CLU_148518_0_0_5"/>
<dbReference type="OrthoDB" id="9799262at2"/>
<dbReference type="Proteomes" id="UP000002528">
    <property type="component" value="Chromosome"/>
</dbReference>
<dbReference type="GO" id="GO:0022627">
    <property type="term" value="C:cytosolic small ribosomal subunit"/>
    <property type="evidence" value="ECO:0007669"/>
    <property type="project" value="TreeGrafter"/>
</dbReference>
<dbReference type="GO" id="GO:0019843">
    <property type="term" value="F:rRNA binding"/>
    <property type="evidence" value="ECO:0007669"/>
    <property type="project" value="UniProtKB-UniRule"/>
</dbReference>
<dbReference type="GO" id="GO:0003735">
    <property type="term" value="F:structural constituent of ribosome"/>
    <property type="evidence" value="ECO:0007669"/>
    <property type="project" value="InterPro"/>
</dbReference>
<dbReference type="GO" id="GO:0006412">
    <property type="term" value="P:translation"/>
    <property type="evidence" value="ECO:0007669"/>
    <property type="project" value="UniProtKB-UniRule"/>
</dbReference>
<dbReference type="CDD" id="cd00353">
    <property type="entry name" value="Ribosomal_S15p_S13e"/>
    <property type="match status" value="1"/>
</dbReference>
<dbReference type="Gene3D" id="6.10.250.3130">
    <property type="match status" value="1"/>
</dbReference>
<dbReference type="Gene3D" id="1.10.287.10">
    <property type="entry name" value="S15/NS1, RNA-binding"/>
    <property type="match status" value="1"/>
</dbReference>
<dbReference type="HAMAP" id="MF_01343_B">
    <property type="entry name" value="Ribosomal_uS15_B"/>
    <property type="match status" value="1"/>
</dbReference>
<dbReference type="InterPro" id="IPR000589">
    <property type="entry name" value="Ribosomal_uS15"/>
</dbReference>
<dbReference type="InterPro" id="IPR005290">
    <property type="entry name" value="Ribosomal_uS15_bac-type"/>
</dbReference>
<dbReference type="InterPro" id="IPR009068">
    <property type="entry name" value="uS15_NS1_RNA-bd_sf"/>
</dbReference>
<dbReference type="NCBIfam" id="TIGR00952">
    <property type="entry name" value="S15_bact"/>
    <property type="match status" value="1"/>
</dbReference>
<dbReference type="PANTHER" id="PTHR23321">
    <property type="entry name" value="RIBOSOMAL PROTEIN S15, BACTERIAL AND ORGANELLAR"/>
    <property type="match status" value="1"/>
</dbReference>
<dbReference type="PANTHER" id="PTHR23321:SF26">
    <property type="entry name" value="SMALL RIBOSOMAL SUBUNIT PROTEIN US15M"/>
    <property type="match status" value="1"/>
</dbReference>
<dbReference type="Pfam" id="PF00312">
    <property type="entry name" value="Ribosomal_S15"/>
    <property type="match status" value="1"/>
</dbReference>
<dbReference type="SMART" id="SM01387">
    <property type="entry name" value="Ribosomal_S15"/>
    <property type="match status" value="1"/>
</dbReference>
<dbReference type="SUPFAM" id="SSF47060">
    <property type="entry name" value="S15/NS1 RNA-binding domain"/>
    <property type="match status" value="1"/>
</dbReference>
<keyword id="KW-1185">Reference proteome</keyword>
<keyword id="KW-0687">Ribonucleoprotein</keyword>
<keyword id="KW-0689">Ribosomal protein</keyword>
<keyword id="KW-0694">RNA-binding</keyword>
<keyword id="KW-0699">rRNA-binding</keyword>